<organism>
    <name type="scientific">Oryza sativa subsp. japonica</name>
    <name type="common">Rice</name>
    <dbReference type="NCBI Taxonomy" id="39947"/>
    <lineage>
        <taxon>Eukaryota</taxon>
        <taxon>Viridiplantae</taxon>
        <taxon>Streptophyta</taxon>
        <taxon>Embryophyta</taxon>
        <taxon>Tracheophyta</taxon>
        <taxon>Spermatophyta</taxon>
        <taxon>Magnoliopsida</taxon>
        <taxon>Liliopsida</taxon>
        <taxon>Poales</taxon>
        <taxon>Poaceae</taxon>
        <taxon>BOP clade</taxon>
        <taxon>Oryzoideae</taxon>
        <taxon>Oryzeae</taxon>
        <taxon>Oryzinae</taxon>
        <taxon>Oryza</taxon>
        <taxon>Oryza sativa</taxon>
    </lineage>
</organism>
<gene>
    <name evidence="5" type="primary">RH3</name>
    <name evidence="9" type="ordered locus">Os01g0508100</name>
    <name evidence="6" type="ordered locus">LOC_Os01g32380</name>
    <name evidence="7" type="ORF">OSJNBa0094H06.34</name>
    <name evidence="8" type="ORF">P0455H03.1</name>
</gene>
<comment type="function">
    <text evidence="3">Binds to and represses NPR1/NH1-mediated transcriptional activation of LG2 in vitro.</text>
</comment>
<comment type="subunit">
    <text evidence="3 4">Interacts with NPR1/NH1 (PubMed:22353606, PubMed:24919709). Interacts with NPR3/NH3 (PubMed:24919709).</text>
</comment>
<comment type="subcellular location">
    <subcellularLocation>
        <location evidence="1">Nucleus</location>
    </subcellularLocation>
</comment>
<comment type="similarity">
    <text>Belongs to the NPR1-interactor family.</text>
</comment>
<comment type="sequence caution" evidence="6">
    <conflict type="erroneous initiation">
        <sequence resource="EMBL-CDS" id="BAD73294"/>
    </conflict>
    <text>Truncated N-terminus.</text>
</comment>
<comment type="sequence caution" evidence="6">
    <conflict type="erroneous initiation">
        <sequence resource="EMBL-CDS" id="BAD73535"/>
    </conflict>
    <text>Truncated N-terminus.</text>
</comment>
<evidence type="ECO:0000250" key="1">
    <source>
        <dbReference type="UniProtKB" id="Q5ZEF1"/>
    </source>
</evidence>
<evidence type="ECO:0000256" key="2">
    <source>
        <dbReference type="SAM" id="MobiDB-lite"/>
    </source>
</evidence>
<evidence type="ECO:0000269" key="3">
    <source>
    </source>
</evidence>
<evidence type="ECO:0000269" key="4">
    <source>
    </source>
</evidence>
<evidence type="ECO:0000303" key="5">
    <source>
    </source>
</evidence>
<evidence type="ECO:0000305" key="6"/>
<evidence type="ECO:0000312" key="7">
    <source>
        <dbReference type="EMBL" id="BAD73294.1"/>
    </source>
</evidence>
<evidence type="ECO:0000312" key="8">
    <source>
        <dbReference type="EMBL" id="BAD73535.1"/>
    </source>
</evidence>
<evidence type="ECO:0000312" key="9">
    <source>
        <dbReference type="EMBL" id="BAF05071.2"/>
    </source>
</evidence>
<accession>B7F924</accession>
<accession>Q5QM03</accession>
<dbReference type="EMBL" id="AP003217">
    <property type="protein sequence ID" value="BAD73294.1"/>
    <property type="status" value="ALT_INIT"/>
    <property type="molecule type" value="Genomic_DNA"/>
</dbReference>
<dbReference type="EMBL" id="AP003435">
    <property type="protein sequence ID" value="BAD73535.1"/>
    <property type="status" value="ALT_INIT"/>
    <property type="molecule type" value="Genomic_DNA"/>
</dbReference>
<dbReference type="EMBL" id="AP008207">
    <property type="protein sequence ID" value="BAF05071.2"/>
    <property type="molecule type" value="Genomic_DNA"/>
</dbReference>
<dbReference type="EMBL" id="AP014957">
    <property type="protein sequence ID" value="BAS72361.1"/>
    <property type="molecule type" value="Genomic_DNA"/>
</dbReference>
<dbReference type="EMBL" id="AK241819">
    <property type="protein sequence ID" value="BAH01122.1"/>
    <property type="molecule type" value="mRNA"/>
</dbReference>
<dbReference type="RefSeq" id="XP_015635010.1">
    <property type="nucleotide sequence ID" value="XM_015779524.1"/>
</dbReference>
<dbReference type="SMR" id="B7F924"/>
<dbReference type="FunCoup" id="B7F924">
    <property type="interactions" value="28"/>
</dbReference>
<dbReference type="PaxDb" id="39947-B7F924"/>
<dbReference type="EnsemblPlants" id="Os01t0508100-01">
    <property type="protein sequence ID" value="Os01t0508100-01"/>
    <property type="gene ID" value="Os01g0508100"/>
</dbReference>
<dbReference type="Gramene" id="Os01t0508100-01">
    <property type="protein sequence ID" value="Os01t0508100-01"/>
    <property type="gene ID" value="Os01g0508100"/>
</dbReference>
<dbReference type="KEGG" id="dosa:Os01g0508100"/>
<dbReference type="HOGENOM" id="CLU_1671960_0_0_1"/>
<dbReference type="InParanoid" id="B7F924"/>
<dbReference type="OMA" id="DGHAMDQ"/>
<dbReference type="OrthoDB" id="693542at2759"/>
<dbReference type="PlantReactome" id="R-OSA-6788019">
    <property type="pathway name" value="Salicylic acid signaling"/>
</dbReference>
<dbReference type="Proteomes" id="UP000000763">
    <property type="component" value="Chromosome 1"/>
</dbReference>
<dbReference type="Proteomes" id="UP000059680">
    <property type="component" value="Chromosome 1"/>
</dbReference>
<dbReference type="GO" id="GO:0005634">
    <property type="term" value="C:nucleus"/>
    <property type="evidence" value="ECO:0007669"/>
    <property type="project" value="UniProtKB-SubCell"/>
</dbReference>
<dbReference type="GO" id="GO:0006952">
    <property type="term" value="P:defense response"/>
    <property type="evidence" value="ECO:0007669"/>
    <property type="project" value="UniProtKB-KW"/>
</dbReference>
<dbReference type="GO" id="GO:0010112">
    <property type="term" value="P:regulation of systemic acquired resistance"/>
    <property type="evidence" value="ECO:0007669"/>
    <property type="project" value="InterPro"/>
</dbReference>
<dbReference type="InterPro" id="IPR031425">
    <property type="entry name" value="NPR1/NH1-interacting"/>
</dbReference>
<dbReference type="PANTHER" id="PTHR33669:SF14">
    <property type="entry name" value="NRR REPRESSOR HOMOLOG 3"/>
    <property type="match status" value="1"/>
</dbReference>
<dbReference type="PANTHER" id="PTHR33669">
    <property type="entry name" value="PROTEIN NEGATIVE REGULATOR OF RESISTANCE"/>
    <property type="match status" value="1"/>
</dbReference>
<dbReference type="Pfam" id="PF15699">
    <property type="entry name" value="NPR1_interact"/>
    <property type="match status" value="1"/>
</dbReference>
<reference key="1">
    <citation type="journal article" date="2002" name="Nature">
        <title>The genome sequence and structure of rice chromosome 1.</title>
        <authorList>
            <person name="Sasaki T."/>
            <person name="Matsumoto T."/>
            <person name="Yamamoto K."/>
            <person name="Sakata K."/>
            <person name="Baba T."/>
            <person name="Katayose Y."/>
            <person name="Wu J."/>
            <person name="Niimura Y."/>
            <person name="Cheng Z."/>
            <person name="Nagamura Y."/>
            <person name="Antonio B.A."/>
            <person name="Kanamori H."/>
            <person name="Hosokawa S."/>
            <person name="Masukawa M."/>
            <person name="Arikawa K."/>
            <person name="Chiden Y."/>
            <person name="Hayashi M."/>
            <person name="Okamoto M."/>
            <person name="Ando T."/>
            <person name="Aoki H."/>
            <person name="Arita K."/>
            <person name="Hamada M."/>
            <person name="Harada C."/>
            <person name="Hijishita S."/>
            <person name="Honda M."/>
            <person name="Ichikawa Y."/>
            <person name="Idonuma A."/>
            <person name="Iijima M."/>
            <person name="Ikeda M."/>
            <person name="Ikeno M."/>
            <person name="Ito S."/>
            <person name="Ito T."/>
            <person name="Ito Y."/>
            <person name="Ito Y."/>
            <person name="Iwabuchi A."/>
            <person name="Kamiya K."/>
            <person name="Karasawa W."/>
            <person name="Katagiri S."/>
            <person name="Kikuta A."/>
            <person name="Kobayashi N."/>
            <person name="Kono I."/>
            <person name="Machita K."/>
            <person name="Maehara T."/>
            <person name="Mizuno H."/>
            <person name="Mizubayashi T."/>
            <person name="Mukai Y."/>
            <person name="Nagasaki H."/>
            <person name="Nakashima M."/>
            <person name="Nakama Y."/>
            <person name="Nakamichi Y."/>
            <person name="Nakamura M."/>
            <person name="Namiki N."/>
            <person name="Negishi M."/>
            <person name="Ohta I."/>
            <person name="Ono N."/>
            <person name="Saji S."/>
            <person name="Sakai K."/>
            <person name="Shibata M."/>
            <person name="Shimokawa T."/>
            <person name="Shomura A."/>
            <person name="Song J."/>
            <person name="Takazaki Y."/>
            <person name="Terasawa K."/>
            <person name="Tsuji K."/>
            <person name="Waki K."/>
            <person name="Yamagata H."/>
            <person name="Yamane H."/>
            <person name="Yoshiki S."/>
            <person name="Yoshihara R."/>
            <person name="Yukawa K."/>
            <person name="Zhong H."/>
            <person name="Iwama H."/>
            <person name="Endo T."/>
            <person name="Ito H."/>
            <person name="Hahn J.H."/>
            <person name="Kim H.-I."/>
            <person name="Eun M.-Y."/>
            <person name="Yano M."/>
            <person name="Jiang J."/>
            <person name="Gojobori T."/>
        </authorList>
    </citation>
    <scope>NUCLEOTIDE SEQUENCE [LARGE SCALE GENOMIC DNA]</scope>
    <source>
        <strain>cv. Nipponbare</strain>
    </source>
</reference>
<reference key="2">
    <citation type="journal article" date="2005" name="Nature">
        <title>The map-based sequence of the rice genome.</title>
        <authorList>
            <consortium name="International rice genome sequencing project (IRGSP)"/>
        </authorList>
    </citation>
    <scope>NUCLEOTIDE SEQUENCE [LARGE SCALE GENOMIC DNA]</scope>
    <source>
        <strain>cv. Nipponbare</strain>
    </source>
</reference>
<reference key="3">
    <citation type="journal article" date="2008" name="Nucleic Acids Res.">
        <title>The rice annotation project database (RAP-DB): 2008 update.</title>
        <authorList>
            <consortium name="The rice annotation project (RAP)"/>
        </authorList>
    </citation>
    <scope>GENOME REANNOTATION</scope>
    <source>
        <strain>cv. Nipponbare</strain>
    </source>
</reference>
<reference key="4">
    <citation type="journal article" date="2013" name="Rice">
        <title>Improvement of the Oryza sativa Nipponbare reference genome using next generation sequence and optical map data.</title>
        <authorList>
            <person name="Kawahara Y."/>
            <person name="de la Bastide M."/>
            <person name="Hamilton J.P."/>
            <person name="Kanamori H."/>
            <person name="McCombie W.R."/>
            <person name="Ouyang S."/>
            <person name="Schwartz D.C."/>
            <person name="Tanaka T."/>
            <person name="Wu J."/>
            <person name="Zhou S."/>
            <person name="Childs K.L."/>
            <person name="Davidson R.M."/>
            <person name="Lin H."/>
            <person name="Quesada-Ocampo L."/>
            <person name="Vaillancourt B."/>
            <person name="Sakai H."/>
            <person name="Lee S.S."/>
            <person name="Kim J."/>
            <person name="Numa H."/>
            <person name="Itoh T."/>
            <person name="Buell C.R."/>
            <person name="Matsumoto T."/>
        </authorList>
    </citation>
    <scope>GENOME REANNOTATION</scope>
    <source>
        <strain>cv. Nipponbare</strain>
    </source>
</reference>
<reference key="5">
    <citation type="submission" date="2006-10" db="EMBL/GenBank/DDBJ databases">
        <title>Oryza sativa full length cDNA.</title>
        <authorList>
            <consortium name="The rice full-length cDNA consortium"/>
        </authorList>
    </citation>
    <scope>NUCLEOTIDE SEQUENCE [LARGE SCALE MRNA]</scope>
    <source>
        <strain>cv. Nipponbare</strain>
    </source>
</reference>
<reference key="6">
    <citation type="journal article" date="2012" name="Plant Methods">
        <title>A rice transient assay system identifies a novel domain in NRR required for interaction with NH1/OsNPR1 and inhibition of NH1-mediated transcriptional activation.</title>
        <authorList>
            <person name="Chern M."/>
            <person name="Bai W."/>
            <person name="Sze-To W.H."/>
            <person name="Canlas P.E."/>
            <person name="Bartley L.E."/>
            <person name="Ronald P.C."/>
        </authorList>
    </citation>
    <scope>FUNCTION</scope>
    <scope>INTERACTION WITH NPR1/NH1</scope>
</reference>
<reference key="7">
    <citation type="journal article" date="2014" name="BMC Genomics">
        <title>Interaction specificity and coexpression of rice NPR1 homologs 1 and 3 (NH1 and NH3), TGA transcription factors and negative regulator of resistance (NRR) proteins.</title>
        <authorList>
            <person name="Chern M."/>
            <person name="Bai W."/>
            <person name="Ruan D."/>
            <person name="Oh T."/>
            <person name="Chen X."/>
            <person name="Ronald P.C."/>
        </authorList>
    </citation>
    <scope>INTERACTION WITH NPR1/NH1 AND NPR3/NH3</scope>
</reference>
<protein>
    <recommendedName>
        <fullName evidence="6">NRR repressor homolog 3</fullName>
    </recommendedName>
</protein>
<sequence length="162" mass="18325">MDPTMPTPHTISGTSPFPRNSSTAAEMIVTEQEHLQPRHRRSRKRDRPPPTPPSGNIKAAPAPLPEGGGHGHEEEARDEDVDRFYALLDEVREMRELWRRNGDCVATKRTSVDGGQKKQDRQQLWRPTFVMEDFAFELKGSQVVQPEKKVDSAPNLDLSLSM</sequence>
<name>NRH3_ORYSJ</name>
<proteinExistence type="evidence at protein level"/>
<keyword id="KW-0539">Nucleus</keyword>
<keyword id="KW-0611">Plant defense</keyword>
<keyword id="KW-1185">Reference proteome</keyword>
<feature type="chain" id="PRO_0000437011" description="NRR repressor homolog 3">
    <location>
        <begin position="1"/>
        <end position="162"/>
    </location>
</feature>
<feature type="region of interest" description="Disordered" evidence="2">
    <location>
        <begin position="1"/>
        <end position="80"/>
    </location>
</feature>
<feature type="compositionally biased region" description="Polar residues" evidence="2">
    <location>
        <begin position="7"/>
        <end position="24"/>
    </location>
</feature>
<feature type="compositionally biased region" description="Basic residues" evidence="2">
    <location>
        <begin position="37"/>
        <end position="46"/>
    </location>
</feature>
<feature type="compositionally biased region" description="Basic and acidic residues" evidence="2">
    <location>
        <begin position="69"/>
        <end position="80"/>
    </location>
</feature>